<evidence type="ECO:0000255" key="1">
    <source>
        <dbReference type="HAMAP-Rule" id="MF_00213"/>
    </source>
</evidence>
<evidence type="ECO:0000305" key="2"/>
<dbReference type="EMBL" id="AE014075">
    <property type="protein sequence ID" value="AAN81735.1"/>
    <property type="status" value="ALT_INIT"/>
    <property type="molecule type" value="Genomic_DNA"/>
</dbReference>
<dbReference type="RefSeq" id="WP_001442018.1">
    <property type="nucleotide sequence ID" value="NZ_CP051263.1"/>
</dbReference>
<dbReference type="SMR" id="Q8FEL9"/>
<dbReference type="STRING" id="199310.c3286"/>
<dbReference type="KEGG" id="ecc:c3286"/>
<dbReference type="eggNOG" id="COG0375">
    <property type="taxonomic scope" value="Bacteria"/>
</dbReference>
<dbReference type="HOGENOM" id="CLU_126929_0_0_6"/>
<dbReference type="Proteomes" id="UP000001410">
    <property type="component" value="Chromosome"/>
</dbReference>
<dbReference type="GO" id="GO:0016151">
    <property type="term" value="F:nickel cation binding"/>
    <property type="evidence" value="ECO:0007669"/>
    <property type="project" value="UniProtKB-UniRule"/>
</dbReference>
<dbReference type="GO" id="GO:0008270">
    <property type="term" value="F:zinc ion binding"/>
    <property type="evidence" value="ECO:0007669"/>
    <property type="project" value="UniProtKB-UniRule"/>
</dbReference>
<dbReference type="GO" id="GO:0051604">
    <property type="term" value="P:protein maturation"/>
    <property type="evidence" value="ECO:0007669"/>
    <property type="project" value="InterPro"/>
</dbReference>
<dbReference type="GO" id="GO:0036211">
    <property type="term" value="P:protein modification process"/>
    <property type="evidence" value="ECO:0007669"/>
    <property type="project" value="UniProtKB-UniRule"/>
</dbReference>
<dbReference type="FunFam" id="3.30.2320.80:FF:000001">
    <property type="entry name" value="Hydrogenase maturation factor HypA"/>
    <property type="match status" value="1"/>
</dbReference>
<dbReference type="Gene3D" id="3.30.2320.80">
    <property type="match status" value="1"/>
</dbReference>
<dbReference type="HAMAP" id="MF_00213">
    <property type="entry name" value="HypA_HybF"/>
    <property type="match status" value="1"/>
</dbReference>
<dbReference type="InterPro" id="IPR020538">
    <property type="entry name" value="Hydgase_Ni_incorp_HypA/HybF_CS"/>
</dbReference>
<dbReference type="InterPro" id="IPR000688">
    <property type="entry name" value="HypA/HybF"/>
</dbReference>
<dbReference type="NCBIfam" id="TIGR00100">
    <property type="entry name" value="hypA"/>
    <property type="match status" value="1"/>
</dbReference>
<dbReference type="NCBIfam" id="NF002979">
    <property type="entry name" value="PRK03681.1"/>
    <property type="match status" value="1"/>
</dbReference>
<dbReference type="NCBIfam" id="NF009046">
    <property type="entry name" value="PRK12380.1"/>
    <property type="match status" value="1"/>
</dbReference>
<dbReference type="PANTHER" id="PTHR34535">
    <property type="entry name" value="HYDROGENASE MATURATION FACTOR HYPA"/>
    <property type="match status" value="1"/>
</dbReference>
<dbReference type="PANTHER" id="PTHR34535:SF3">
    <property type="entry name" value="HYDROGENASE MATURATION FACTOR HYPA"/>
    <property type="match status" value="1"/>
</dbReference>
<dbReference type="Pfam" id="PF01155">
    <property type="entry name" value="HypA"/>
    <property type="match status" value="1"/>
</dbReference>
<dbReference type="PIRSF" id="PIRSF004761">
    <property type="entry name" value="Hydrgn_mat_HypA"/>
    <property type="match status" value="1"/>
</dbReference>
<dbReference type="PROSITE" id="PS01249">
    <property type="entry name" value="HYPA"/>
    <property type="match status" value="1"/>
</dbReference>
<reference key="1">
    <citation type="journal article" date="2002" name="Proc. Natl. Acad. Sci. U.S.A.">
        <title>Extensive mosaic structure revealed by the complete genome sequence of uropathogenic Escherichia coli.</title>
        <authorList>
            <person name="Welch R.A."/>
            <person name="Burland V."/>
            <person name="Plunkett G. III"/>
            <person name="Redford P."/>
            <person name="Roesch P."/>
            <person name="Rasko D."/>
            <person name="Buckles E.L."/>
            <person name="Liou S.-R."/>
            <person name="Boutin A."/>
            <person name="Hackett J."/>
            <person name="Stroud D."/>
            <person name="Mayhew G.F."/>
            <person name="Rose D.J."/>
            <person name="Zhou S."/>
            <person name="Schwartz D.C."/>
            <person name="Perna N.T."/>
            <person name="Mobley H.L.T."/>
            <person name="Donnenberg M.S."/>
            <person name="Blattner F.R."/>
        </authorList>
    </citation>
    <scope>NUCLEOTIDE SEQUENCE [LARGE SCALE GENOMIC DNA]</scope>
    <source>
        <strain>CFT073 / ATCC 700928 / UPEC</strain>
    </source>
</reference>
<proteinExistence type="inferred from homology"/>
<name>HYPA_ECOL6</name>
<keyword id="KW-0479">Metal-binding</keyword>
<keyword id="KW-0533">Nickel</keyword>
<keyword id="KW-1185">Reference proteome</keyword>
<keyword id="KW-0862">Zinc</keyword>
<comment type="function">
    <text evidence="1">Involved in the maturation of [NiFe] hydrogenases. Required for nickel insertion into the metal center of the hydrogenase.</text>
</comment>
<comment type="similarity">
    <text evidence="1">Belongs to the HypA/HybF family.</text>
</comment>
<comment type="sequence caution" evidence="2">
    <conflict type="erroneous initiation">
        <sequence resource="EMBL-CDS" id="AAN81735"/>
    </conflict>
</comment>
<feature type="chain" id="PRO_0000129059" description="Hydrogenase maturation factor HypA">
    <location>
        <begin position="1"/>
        <end position="116"/>
    </location>
</feature>
<feature type="binding site" evidence="1">
    <location>
        <position position="2"/>
    </location>
    <ligand>
        <name>Ni(2+)</name>
        <dbReference type="ChEBI" id="CHEBI:49786"/>
    </ligand>
</feature>
<feature type="binding site" evidence="1">
    <location>
        <position position="73"/>
    </location>
    <ligand>
        <name>Zn(2+)</name>
        <dbReference type="ChEBI" id="CHEBI:29105"/>
    </ligand>
</feature>
<feature type="binding site" evidence="1">
    <location>
        <position position="76"/>
    </location>
    <ligand>
        <name>Zn(2+)</name>
        <dbReference type="ChEBI" id="CHEBI:29105"/>
    </ligand>
</feature>
<feature type="binding site" evidence="1">
    <location>
        <position position="90"/>
    </location>
    <ligand>
        <name>Zn(2+)</name>
        <dbReference type="ChEBI" id="CHEBI:29105"/>
    </ligand>
</feature>
<feature type="binding site" evidence="1">
    <location>
        <position position="93"/>
    </location>
    <ligand>
        <name>Zn(2+)</name>
        <dbReference type="ChEBI" id="CHEBI:29105"/>
    </ligand>
</feature>
<protein>
    <recommendedName>
        <fullName evidence="1">Hydrogenase maturation factor HypA</fullName>
    </recommendedName>
</protein>
<gene>
    <name evidence="1" type="primary">hypA</name>
    <name type="ordered locus">c3286</name>
</gene>
<sequence>MHEITLCQRALELIEQQAAKHGAKRVTGVWLKIGAFSCVETSSLAFCFDLVCRGSVAEGCKLHLEEQEAECWCETCQQYVTLLTQRVRRCPLCHGDMLQIVADDGLQIRRIEIDQE</sequence>
<accession>Q8FEL9</accession>
<organism>
    <name type="scientific">Escherichia coli O6:H1 (strain CFT073 / ATCC 700928 / UPEC)</name>
    <dbReference type="NCBI Taxonomy" id="199310"/>
    <lineage>
        <taxon>Bacteria</taxon>
        <taxon>Pseudomonadati</taxon>
        <taxon>Pseudomonadota</taxon>
        <taxon>Gammaproteobacteria</taxon>
        <taxon>Enterobacterales</taxon>
        <taxon>Enterobacteriaceae</taxon>
        <taxon>Escherichia</taxon>
    </lineage>
</organism>